<feature type="signal peptide" evidence="1">
    <location>
        <begin position="1"/>
        <end position="32"/>
    </location>
</feature>
<feature type="chain" id="PRO_5000065877" description="Beta-galactosidase 1">
    <location>
        <begin position="33"/>
        <end position="847"/>
    </location>
</feature>
<feature type="domain" description="SUEL-type lectin" evidence="2">
    <location>
        <begin position="761"/>
        <end position="847"/>
    </location>
</feature>
<feature type="active site" description="Proton donor" evidence="1">
    <location>
        <position position="190"/>
    </location>
</feature>
<feature type="active site" description="Nucleophile" evidence="1">
    <location>
        <position position="259"/>
    </location>
</feature>
<feature type="glycosylation site" description="N-linked (GlcNAc...) asparagine" evidence="1">
    <location>
        <position position="469"/>
    </location>
</feature>
<feature type="sequence conflict" description="In Ref. 4; AAM13196." evidence="5" ref="4">
    <original>V</original>
    <variation>L</variation>
    <location>
        <position position="512"/>
    </location>
</feature>
<gene>
    <name type="primary">BGAL1</name>
    <name type="ordered locus">At3g13750</name>
    <name type="ORF">MMM17.1</name>
</gene>
<organism>
    <name type="scientific">Arabidopsis thaliana</name>
    <name type="common">Mouse-ear cress</name>
    <dbReference type="NCBI Taxonomy" id="3702"/>
    <lineage>
        <taxon>Eukaryota</taxon>
        <taxon>Viridiplantae</taxon>
        <taxon>Streptophyta</taxon>
        <taxon>Embryophyta</taxon>
        <taxon>Tracheophyta</taxon>
        <taxon>Spermatophyta</taxon>
        <taxon>Magnoliopsida</taxon>
        <taxon>eudicotyledons</taxon>
        <taxon>Gunneridae</taxon>
        <taxon>Pentapetalae</taxon>
        <taxon>rosids</taxon>
        <taxon>malvids</taxon>
        <taxon>Brassicales</taxon>
        <taxon>Brassicaceae</taxon>
        <taxon>Camelineae</taxon>
        <taxon>Arabidopsis</taxon>
    </lineage>
</organism>
<keyword id="KW-0052">Apoplast</keyword>
<keyword id="KW-0325">Glycoprotein</keyword>
<keyword id="KW-0326">Glycosidase</keyword>
<keyword id="KW-0378">Hydrolase</keyword>
<keyword id="KW-1185">Reference proteome</keyword>
<keyword id="KW-0964">Secreted</keyword>
<keyword id="KW-0732">Signal</keyword>
<comment type="catalytic activity">
    <reaction>
        <text>Hydrolysis of terminal non-reducing beta-D-galactose residues in beta-D-galactosides.</text>
        <dbReference type="EC" id="3.2.1.23"/>
    </reaction>
</comment>
<comment type="subcellular location">
    <subcellularLocation>
        <location evidence="5">Secreted</location>
        <location evidence="5">Extracellular space</location>
        <location evidence="5">Apoplast</location>
    </subcellularLocation>
</comment>
<comment type="tissue specificity">
    <text evidence="3 4">Ubiquitous, at low levels.</text>
</comment>
<comment type="similarity">
    <text evidence="5">Belongs to the glycosyl hydrolase 35 family.</text>
</comment>
<evidence type="ECO:0000255" key="1"/>
<evidence type="ECO:0000255" key="2">
    <source>
        <dbReference type="PROSITE-ProRule" id="PRU00260"/>
    </source>
</evidence>
<evidence type="ECO:0000269" key="3">
    <source>
    </source>
</evidence>
<evidence type="ECO:0000269" key="4">
    <source>
    </source>
</evidence>
<evidence type="ECO:0000305" key="5"/>
<proteinExistence type="evidence at transcript level"/>
<protein>
    <recommendedName>
        <fullName>Beta-galactosidase 1</fullName>
        <shortName>Lactase 1</shortName>
        <ecNumber>3.2.1.23</ecNumber>
    </recommendedName>
</protein>
<name>BGAL1_ARATH</name>
<dbReference type="EC" id="3.2.1.23"/>
<dbReference type="EMBL" id="AJ270297">
    <property type="protein sequence ID" value="CAB64737.1"/>
    <property type="molecule type" value="mRNA"/>
</dbReference>
<dbReference type="EMBL" id="AP001307">
    <property type="protein sequence ID" value="BAB01923.1"/>
    <property type="molecule type" value="Genomic_DNA"/>
</dbReference>
<dbReference type="EMBL" id="CP002686">
    <property type="protein sequence ID" value="AEE75407.1"/>
    <property type="molecule type" value="Genomic_DNA"/>
</dbReference>
<dbReference type="EMBL" id="AY093197">
    <property type="protein sequence ID" value="AAM13196.1"/>
    <property type="molecule type" value="mRNA"/>
</dbReference>
<dbReference type="EMBL" id="AK222229">
    <property type="protein sequence ID" value="BAD95407.1"/>
    <property type="molecule type" value="mRNA"/>
</dbReference>
<dbReference type="RefSeq" id="NP_187988.1">
    <property type="nucleotide sequence ID" value="NM_112225.5"/>
</dbReference>
<dbReference type="SMR" id="Q9SCW1"/>
<dbReference type="BioGRID" id="5918">
    <property type="interactions" value="3"/>
</dbReference>
<dbReference type="FunCoup" id="Q9SCW1">
    <property type="interactions" value="308"/>
</dbReference>
<dbReference type="IntAct" id="Q9SCW1">
    <property type="interactions" value="1"/>
</dbReference>
<dbReference type="STRING" id="3702.Q9SCW1"/>
<dbReference type="CAZy" id="GH35">
    <property type="family name" value="Glycoside Hydrolase Family 35"/>
</dbReference>
<dbReference type="GlyCosmos" id="Q9SCW1">
    <property type="glycosylation" value="1 site, No reported glycans"/>
</dbReference>
<dbReference type="GlyGen" id="Q9SCW1">
    <property type="glycosylation" value="1 site"/>
</dbReference>
<dbReference type="iPTMnet" id="Q9SCW1"/>
<dbReference type="PaxDb" id="3702-AT3G13750.1"/>
<dbReference type="ProteomicsDB" id="240679"/>
<dbReference type="EnsemblPlants" id="AT3G13750.1">
    <property type="protein sequence ID" value="AT3G13750.1"/>
    <property type="gene ID" value="AT3G13750"/>
</dbReference>
<dbReference type="GeneID" id="820584"/>
<dbReference type="Gramene" id="AT3G13750.1">
    <property type="protein sequence ID" value="AT3G13750.1"/>
    <property type="gene ID" value="AT3G13750"/>
</dbReference>
<dbReference type="KEGG" id="ath:AT3G13750"/>
<dbReference type="Araport" id="AT3G13750"/>
<dbReference type="TAIR" id="AT3G13750">
    <property type="gene designation" value="BGAL1"/>
</dbReference>
<dbReference type="eggNOG" id="KOG0496">
    <property type="taxonomic scope" value="Eukaryota"/>
</dbReference>
<dbReference type="HOGENOM" id="CLU_007853_4_0_1"/>
<dbReference type="InParanoid" id="Q9SCW1"/>
<dbReference type="OMA" id="NYDQHSF"/>
<dbReference type="PhylomeDB" id="Q9SCW1"/>
<dbReference type="BioCyc" id="ARA:AT3G13750-MONOMER"/>
<dbReference type="CD-CODE" id="4299E36E">
    <property type="entry name" value="Nucleolus"/>
</dbReference>
<dbReference type="PRO" id="PR:Q9SCW1"/>
<dbReference type="Proteomes" id="UP000006548">
    <property type="component" value="Chromosome 3"/>
</dbReference>
<dbReference type="ExpressionAtlas" id="Q9SCW1">
    <property type="expression patterns" value="baseline and differential"/>
</dbReference>
<dbReference type="GO" id="GO:0048046">
    <property type="term" value="C:apoplast"/>
    <property type="evidence" value="ECO:0007669"/>
    <property type="project" value="UniProtKB-SubCell"/>
</dbReference>
<dbReference type="GO" id="GO:0005829">
    <property type="term" value="C:cytosol"/>
    <property type="evidence" value="ECO:0007005"/>
    <property type="project" value="TAIR"/>
</dbReference>
<dbReference type="GO" id="GO:0009505">
    <property type="term" value="C:plant-type cell wall"/>
    <property type="evidence" value="ECO:0000314"/>
    <property type="project" value="TAIR"/>
</dbReference>
<dbReference type="GO" id="GO:0009506">
    <property type="term" value="C:plasmodesma"/>
    <property type="evidence" value="ECO:0007005"/>
    <property type="project" value="TAIR"/>
</dbReference>
<dbReference type="GO" id="GO:0004565">
    <property type="term" value="F:beta-galactosidase activity"/>
    <property type="evidence" value="ECO:0000314"/>
    <property type="project" value="TAIR"/>
</dbReference>
<dbReference type="GO" id="GO:0030246">
    <property type="term" value="F:carbohydrate binding"/>
    <property type="evidence" value="ECO:0007669"/>
    <property type="project" value="InterPro"/>
</dbReference>
<dbReference type="GO" id="GO:0005975">
    <property type="term" value="P:carbohydrate metabolic process"/>
    <property type="evidence" value="ECO:0007669"/>
    <property type="project" value="InterPro"/>
</dbReference>
<dbReference type="CDD" id="cd22842">
    <property type="entry name" value="Gal_Rha_Lectin_BGal"/>
    <property type="match status" value="1"/>
</dbReference>
<dbReference type="FunFam" id="2.60.120.260:FF:000061">
    <property type="entry name" value="Beta-galactosidase"/>
    <property type="match status" value="1"/>
</dbReference>
<dbReference type="FunFam" id="2.60.120.260:FF:000076">
    <property type="entry name" value="Beta-galactosidase"/>
    <property type="match status" value="1"/>
</dbReference>
<dbReference type="FunFam" id="2.60.120.260:FF:000142">
    <property type="entry name" value="Beta-galactosidase"/>
    <property type="match status" value="1"/>
</dbReference>
<dbReference type="FunFam" id="2.60.120.740:FF:000002">
    <property type="entry name" value="Beta-galactosidase"/>
    <property type="match status" value="1"/>
</dbReference>
<dbReference type="FunFam" id="3.20.20.80:FF:000021">
    <property type="entry name" value="Beta-galactosidase"/>
    <property type="match status" value="1"/>
</dbReference>
<dbReference type="Gene3D" id="2.60.120.740">
    <property type="match status" value="1"/>
</dbReference>
<dbReference type="Gene3D" id="2.60.120.260">
    <property type="entry name" value="Galactose-binding domain-like"/>
    <property type="match status" value="1"/>
</dbReference>
<dbReference type="Gene3D" id="3.20.20.80">
    <property type="entry name" value="Glycosidases"/>
    <property type="match status" value="1"/>
</dbReference>
<dbReference type="InterPro" id="IPR048913">
    <property type="entry name" value="BetaGal_gal-bd"/>
</dbReference>
<dbReference type="InterPro" id="IPR008979">
    <property type="entry name" value="Galactose-bd-like_sf"/>
</dbReference>
<dbReference type="InterPro" id="IPR041392">
    <property type="entry name" value="GHD"/>
</dbReference>
<dbReference type="InterPro" id="IPR031330">
    <property type="entry name" value="Gly_Hdrlase_35_cat"/>
</dbReference>
<dbReference type="InterPro" id="IPR019801">
    <property type="entry name" value="Glyco_hydro_35_CS"/>
</dbReference>
<dbReference type="InterPro" id="IPR001944">
    <property type="entry name" value="Glycoside_Hdrlase_35"/>
</dbReference>
<dbReference type="InterPro" id="IPR017853">
    <property type="entry name" value="Glycoside_hydrolase_SF"/>
</dbReference>
<dbReference type="InterPro" id="IPR000922">
    <property type="entry name" value="Lectin_gal-bd_dom"/>
</dbReference>
<dbReference type="InterPro" id="IPR043159">
    <property type="entry name" value="Lectin_gal-bd_sf"/>
</dbReference>
<dbReference type="PANTHER" id="PTHR23421">
    <property type="entry name" value="BETA-GALACTOSIDASE RELATED"/>
    <property type="match status" value="1"/>
</dbReference>
<dbReference type="Pfam" id="PF21467">
    <property type="entry name" value="BetaGal_gal-bd"/>
    <property type="match status" value="2"/>
</dbReference>
<dbReference type="Pfam" id="PF17834">
    <property type="entry name" value="GHD"/>
    <property type="match status" value="1"/>
</dbReference>
<dbReference type="Pfam" id="PF01301">
    <property type="entry name" value="Glyco_hydro_35"/>
    <property type="match status" value="1"/>
</dbReference>
<dbReference type="Pfam" id="PF02140">
    <property type="entry name" value="SUEL_Lectin"/>
    <property type="match status" value="1"/>
</dbReference>
<dbReference type="PRINTS" id="PR00742">
    <property type="entry name" value="GLHYDRLASE35"/>
</dbReference>
<dbReference type="SUPFAM" id="SSF51445">
    <property type="entry name" value="(Trans)glycosidases"/>
    <property type="match status" value="1"/>
</dbReference>
<dbReference type="SUPFAM" id="SSF49785">
    <property type="entry name" value="Galactose-binding domain-like"/>
    <property type="match status" value="2"/>
</dbReference>
<dbReference type="PROSITE" id="PS01182">
    <property type="entry name" value="GLYCOSYL_HYDROL_F35"/>
    <property type="match status" value="1"/>
</dbReference>
<dbReference type="PROSITE" id="PS00435">
    <property type="entry name" value="PEROXIDASE_1"/>
    <property type="match status" value="1"/>
</dbReference>
<dbReference type="PROSITE" id="PS50228">
    <property type="entry name" value="SUEL_LECTIN"/>
    <property type="match status" value="1"/>
</dbReference>
<reference key="1">
    <citation type="submission" date="1999-10" db="EMBL/GenBank/DDBJ databases">
        <title>The beta-galactosidases are encoding by a multigene family in Arabidopsis thaliana.</title>
        <authorList>
            <person name="Gy I."/>
            <person name="Kreis M."/>
            <person name="Lecharny A."/>
        </authorList>
    </citation>
    <scope>NUCLEOTIDE SEQUENCE [MRNA]</scope>
</reference>
<reference key="2">
    <citation type="journal article" date="2000" name="DNA Res.">
        <title>Structural analysis of Arabidopsis thaliana chromosome 3. II. Sequence features of the 4,251,695 bp regions covered by 90 P1, TAC and BAC clones.</title>
        <authorList>
            <person name="Kaneko T."/>
            <person name="Katoh T."/>
            <person name="Sato S."/>
            <person name="Nakamura Y."/>
            <person name="Asamizu E."/>
            <person name="Tabata S."/>
        </authorList>
    </citation>
    <scope>NUCLEOTIDE SEQUENCE [LARGE SCALE GENOMIC DNA]</scope>
    <source>
        <strain>cv. Columbia</strain>
    </source>
</reference>
<reference key="3">
    <citation type="journal article" date="2017" name="Plant J.">
        <title>Araport11: a complete reannotation of the Arabidopsis thaliana reference genome.</title>
        <authorList>
            <person name="Cheng C.Y."/>
            <person name="Krishnakumar V."/>
            <person name="Chan A.P."/>
            <person name="Thibaud-Nissen F."/>
            <person name="Schobel S."/>
            <person name="Town C.D."/>
        </authorList>
    </citation>
    <scope>GENOME REANNOTATION</scope>
    <source>
        <strain>cv. Columbia</strain>
    </source>
</reference>
<reference key="4">
    <citation type="journal article" date="2003" name="Science">
        <title>Empirical analysis of transcriptional activity in the Arabidopsis genome.</title>
        <authorList>
            <person name="Yamada K."/>
            <person name="Lim J."/>
            <person name="Dale J.M."/>
            <person name="Chen H."/>
            <person name="Shinn P."/>
            <person name="Palm C.J."/>
            <person name="Southwick A.M."/>
            <person name="Wu H.C."/>
            <person name="Kim C.J."/>
            <person name="Nguyen M."/>
            <person name="Pham P.K."/>
            <person name="Cheuk R.F."/>
            <person name="Karlin-Newmann G."/>
            <person name="Liu S.X."/>
            <person name="Lam B."/>
            <person name="Sakano H."/>
            <person name="Wu T."/>
            <person name="Yu G."/>
            <person name="Miranda M."/>
            <person name="Quach H.L."/>
            <person name="Tripp M."/>
            <person name="Chang C.H."/>
            <person name="Lee J.M."/>
            <person name="Toriumi M.J."/>
            <person name="Chan M.M."/>
            <person name="Tang C.C."/>
            <person name="Onodera C.S."/>
            <person name="Deng J.M."/>
            <person name="Akiyama K."/>
            <person name="Ansari Y."/>
            <person name="Arakawa T."/>
            <person name="Banh J."/>
            <person name="Banno F."/>
            <person name="Bowser L."/>
            <person name="Brooks S.Y."/>
            <person name="Carninci P."/>
            <person name="Chao Q."/>
            <person name="Choy N."/>
            <person name="Enju A."/>
            <person name="Goldsmith A.D."/>
            <person name="Gurjal M."/>
            <person name="Hansen N.F."/>
            <person name="Hayashizaki Y."/>
            <person name="Johnson-Hopson C."/>
            <person name="Hsuan V.W."/>
            <person name="Iida K."/>
            <person name="Karnes M."/>
            <person name="Khan S."/>
            <person name="Koesema E."/>
            <person name="Ishida J."/>
            <person name="Jiang P.X."/>
            <person name="Jones T."/>
            <person name="Kawai J."/>
            <person name="Kamiya A."/>
            <person name="Meyers C."/>
            <person name="Nakajima M."/>
            <person name="Narusaka M."/>
            <person name="Seki M."/>
            <person name="Sakurai T."/>
            <person name="Satou M."/>
            <person name="Tamse R."/>
            <person name="Vaysberg M."/>
            <person name="Wallender E.K."/>
            <person name="Wong C."/>
            <person name="Yamamura Y."/>
            <person name="Yuan S."/>
            <person name="Shinozaki K."/>
            <person name="Davis R.W."/>
            <person name="Theologis A."/>
            <person name="Ecker J.R."/>
        </authorList>
    </citation>
    <scope>NUCLEOTIDE SEQUENCE [LARGE SCALE MRNA]</scope>
    <source>
        <strain>cv. Columbia</strain>
    </source>
</reference>
<reference key="5">
    <citation type="submission" date="2006-07" db="EMBL/GenBank/DDBJ databases">
        <title>Large-scale analysis of RIKEN Arabidopsis full-length (RAFL) cDNAs.</title>
        <authorList>
            <person name="Totoki Y."/>
            <person name="Seki M."/>
            <person name="Ishida J."/>
            <person name="Nakajima M."/>
            <person name="Enju A."/>
            <person name="Kamiya A."/>
            <person name="Narusaka M."/>
            <person name="Shin-i T."/>
            <person name="Nakagawa M."/>
            <person name="Sakamoto N."/>
            <person name="Oishi K."/>
            <person name="Kohara Y."/>
            <person name="Kobayashi M."/>
            <person name="Toyoda A."/>
            <person name="Sakaki Y."/>
            <person name="Sakurai T."/>
            <person name="Iida K."/>
            <person name="Akiyama K."/>
            <person name="Satou M."/>
            <person name="Toyoda T."/>
            <person name="Konagaya A."/>
            <person name="Carninci P."/>
            <person name="Kawai J."/>
            <person name="Hayashizaki Y."/>
            <person name="Shinozaki K."/>
        </authorList>
    </citation>
    <scope>NUCLEOTIDE SEQUENCE [LARGE SCALE MRNA] OF 578-847</scope>
    <source>
        <strain>cv. Columbia</strain>
    </source>
</reference>
<reference key="6">
    <citation type="journal article" date="2006" name="Plant Cell Physiol.">
        <title>Apoplastic glycosidases active against xyloglucan oligosaccharides of Arabidopsis thaliana.</title>
        <authorList>
            <person name="Iglesias N."/>
            <person name="Abelenda J.A."/>
            <person name="Rodino M."/>
            <person name="Sampedro J."/>
            <person name="Revilla G."/>
            <person name="Zarra I."/>
        </authorList>
    </citation>
    <scope>TISSUE SPECIFICITY</scope>
</reference>
<reference key="7">
    <citation type="journal article" date="2007" name="Phytochemistry">
        <title>Functional genomic analysis of Arabidopsis thaliana glycoside hydrolase family 35.</title>
        <authorList>
            <person name="Ahn Y.O."/>
            <person name="Zheng M."/>
            <person name="Bevan D.R."/>
            <person name="Esen A."/>
            <person name="Shiu S.-H."/>
            <person name="Benson J."/>
            <person name="Peng H.-P."/>
            <person name="Miller J.T."/>
            <person name="Cheng C.-L."/>
            <person name="Poulton J.E."/>
            <person name="Shih M.-C."/>
        </authorList>
    </citation>
    <scope>TISSUE SPECIFICITY</scope>
    <scope>GENE FAMILY</scope>
    <scope>NOMENCLATURE</scope>
</reference>
<accession>Q9SCW1</accession>
<accession>Q56W18</accession>
<accession>Q8RWC1</accession>
<sequence>MGSKPNAMKNVVAMAAVSALFLLGFLVCSVSGSVSYDSRAITINGKRRILISGSIHYPRSTPEMWPDLIRKAKEGGLDVIQTYVFWNGHEPSPGKYYFEGNYDLVKFVKLVQQSGLYLHLRIGPYVCAEWNFGGFPVWLKYIPGISFRTDNGPFKAQMQRFTTKIVNMMKAERLFESQGGPIILSQIENEYGPMEYELGAPGRSYTNWAAKMAVGLGTGVPWVMCKQDDAPDPIINACNGFYCDYFSPNKAYKPKMWTEAWTGWFTKFGGPVPYRPAEDMAFSVARFIQKGGSFINYYMYHGGTNFGRTAGGPFIATSYDYDAPLDEYGLERQPKWGHLKDLHRAIKLCEPALVSGEPTRMPLGNYQEAHVYKSKSGACSAFLANYNPKSYAKVSFGNNHYNLPPWSISILPDCKNTVYNTARVGAQTSRMKMVRVPVHGGLSWQAYNEDPSTYIDESFTMVGLVEQINTTRDTSDYLWYMTDVKVDANEGFLRNGDLPTLTVLSAGHAMHVFINGQLSGSAYGSLDSPKLTFRKGVNLRAGFNKIAILSIAVGLPNVGPHFETWNAGVLGPVSLNGLNGGRRDLSWQKWTYKVGLKGESLSLHSLSGSSSVEWAEGAFVAQKQPLTWYKTTFSAPAGDSPLAVDMGSMGKGQIWINGQSLGRHWPAYKAVGSCSECSYTGTFREDKCLRNCGEASQRWYHVPRSWLKPSGNLLVVFEEWGGDPNGITLVRREVDSVCADIYEWQSTLVNYQLHASGKVNKPLHPKAHLQCGPGQKITTVKFASFGTPEGTCGSYRQGSCHAHHSYDAFNKLCVGQNWCSVTVAPEMFGGDPCPNVMKKLAVEAVCA</sequence>